<comment type="function">
    <text>Protein S12 is involved in the translation initiation step.</text>
</comment>
<comment type="subcellular location">
    <subcellularLocation>
        <location>Mitochondrion</location>
    </subcellularLocation>
</comment>
<comment type="similarity">
    <text evidence="2">Belongs to the universal ribosomal protein uS12 family.</text>
</comment>
<dbReference type="EMBL" id="M68929">
    <property type="protein sequence ID" value="AAC09402.1"/>
    <property type="molecule type" value="Genomic_DNA"/>
</dbReference>
<dbReference type="PIR" id="S25963">
    <property type="entry name" value="S25963"/>
</dbReference>
<dbReference type="RefSeq" id="NP_054405.1">
    <property type="nucleotide sequence ID" value="NC_001660.1"/>
</dbReference>
<dbReference type="SMR" id="P26871"/>
<dbReference type="GeneID" id="2702667"/>
<dbReference type="GO" id="GO:0005739">
    <property type="term" value="C:mitochondrion"/>
    <property type="evidence" value="ECO:0007669"/>
    <property type="project" value="UniProtKB-SubCell"/>
</dbReference>
<dbReference type="GO" id="GO:0015935">
    <property type="term" value="C:small ribosomal subunit"/>
    <property type="evidence" value="ECO:0007669"/>
    <property type="project" value="InterPro"/>
</dbReference>
<dbReference type="GO" id="GO:0003735">
    <property type="term" value="F:structural constituent of ribosome"/>
    <property type="evidence" value="ECO:0007669"/>
    <property type="project" value="InterPro"/>
</dbReference>
<dbReference type="GO" id="GO:0006412">
    <property type="term" value="P:translation"/>
    <property type="evidence" value="ECO:0007669"/>
    <property type="project" value="InterPro"/>
</dbReference>
<dbReference type="CDD" id="cd03368">
    <property type="entry name" value="Ribosomal_S12"/>
    <property type="match status" value="1"/>
</dbReference>
<dbReference type="FunFam" id="2.40.50.140:FF:000099">
    <property type="entry name" value="Ribosomal protein S12, mitochondrial"/>
    <property type="match status" value="1"/>
</dbReference>
<dbReference type="Gene3D" id="2.40.50.140">
    <property type="entry name" value="Nucleic acid-binding proteins"/>
    <property type="match status" value="1"/>
</dbReference>
<dbReference type="HAMAP" id="MF_00403_B">
    <property type="entry name" value="Ribosomal_uS12_B"/>
    <property type="match status" value="1"/>
</dbReference>
<dbReference type="InterPro" id="IPR012340">
    <property type="entry name" value="NA-bd_OB-fold"/>
</dbReference>
<dbReference type="InterPro" id="IPR006032">
    <property type="entry name" value="Ribosomal_uS12"/>
</dbReference>
<dbReference type="InterPro" id="IPR005679">
    <property type="entry name" value="Ribosomal_uS12_bac"/>
</dbReference>
<dbReference type="NCBIfam" id="TIGR00981">
    <property type="entry name" value="rpsL_bact"/>
    <property type="match status" value="1"/>
</dbReference>
<dbReference type="PANTHER" id="PTHR11652">
    <property type="entry name" value="30S RIBOSOMAL PROTEIN S12 FAMILY MEMBER"/>
    <property type="match status" value="1"/>
</dbReference>
<dbReference type="Pfam" id="PF00164">
    <property type="entry name" value="Ribosom_S12_S23"/>
    <property type="match status" value="1"/>
</dbReference>
<dbReference type="PIRSF" id="PIRSF002133">
    <property type="entry name" value="Ribosomal_S12/S23"/>
    <property type="match status" value="1"/>
</dbReference>
<dbReference type="PRINTS" id="PR01034">
    <property type="entry name" value="RIBOSOMALS12"/>
</dbReference>
<dbReference type="SUPFAM" id="SSF50249">
    <property type="entry name" value="Nucleic acid-binding proteins"/>
    <property type="match status" value="1"/>
</dbReference>
<dbReference type="PROSITE" id="PS00055">
    <property type="entry name" value="RIBOSOMAL_S12"/>
    <property type="match status" value="1"/>
</dbReference>
<evidence type="ECO:0000256" key="1">
    <source>
        <dbReference type="SAM" id="MobiDB-lite"/>
    </source>
</evidence>
<evidence type="ECO:0000305" key="2"/>
<feature type="chain" id="PRO_0000146441" description="Small ribosomal subunit protein uS12m">
    <location>
        <begin position="1"/>
        <end position="126"/>
    </location>
</feature>
<feature type="region of interest" description="Disordered" evidence="1">
    <location>
        <begin position="1"/>
        <end position="27"/>
    </location>
</feature>
<feature type="region of interest" description="Disordered" evidence="1">
    <location>
        <begin position="106"/>
        <end position="126"/>
    </location>
</feature>
<feature type="compositionally biased region" description="Basic residues" evidence="1">
    <location>
        <begin position="12"/>
        <end position="23"/>
    </location>
</feature>
<feature type="compositionally biased region" description="Basic residues" evidence="1">
    <location>
        <begin position="109"/>
        <end position="120"/>
    </location>
</feature>
<geneLocation type="mitochondrion"/>
<gene>
    <name type="primary">RPS12</name>
</gene>
<proteinExistence type="inferred from homology"/>
<accession>P26871</accession>
<organism>
    <name type="scientific">Marchantia polymorpha</name>
    <name type="common">Common liverwort</name>
    <name type="synonym">Marchantia aquatica</name>
    <dbReference type="NCBI Taxonomy" id="3197"/>
    <lineage>
        <taxon>Eukaryota</taxon>
        <taxon>Viridiplantae</taxon>
        <taxon>Streptophyta</taxon>
        <taxon>Embryophyta</taxon>
        <taxon>Marchantiophyta</taxon>
        <taxon>Marchantiopsida</taxon>
        <taxon>Marchantiidae</taxon>
        <taxon>Marchantiales</taxon>
        <taxon>Marchantiaceae</taxon>
        <taxon>Marchantia</taxon>
    </lineage>
</organism>
<name>RT12_MARPO</name>
<sequence>MPTMNQLVRKGRESKRRTKRTRALNKCPQKQGVCLRVSTRSPKKPNSALRKIAKVRLTNRNEIIAYIPGEGHNLQEHSVVMVRGGRVQDLPGVKYHCIRGVKDLQGIPGRRRGRSKYGTKKPKDYI</sequence>
<keyword id="KW-0496">Mitochondrion</keyword>
<keyword id="KW-0687">Ribonucleoprotein</keyword>
<keyword id="KW-0689">Ribosomal protein</keyword>
<protein>
    <recommendedName>
        <fullName evidence="2">Small ribosomal subunit protein uS12m</fullName>
    </recommendedName>
    <alternativeName>
        <fullName>Ribosomal protein S12, mitochondrial</fullName>
    </alternativeName>
</protein>
<reference key="1">
    <citation type="journal article" date="1992" name="J. Mol. Biol.">
        <title>Gene organization deduced from the complete sequence of liverwort Marchantia polymorpha mitochondrial DNA. A primitive form of plant mitochondrial genome.</title>
        <authorList>
            <person name="Oda K."/>
            <person name="Yamato K."/>
            <person name="Ohta E."/>
            <person name="Nakamura Y."/>
            <person name="Takemura M."/>
            <person name="Nozato N."/>
            <person name="Akashi K."/>
            <person name="Kanegae T."/>
            <person name="Ogura Y."/>
            <person name="Kohchi T."/>
            <person name="Ohyama K."/>
        </authorList>
    </citation>
    <scope>NUCLEOTIDE SEQUENCE [GENOMIC DNA]</scope>
</reference>
<reference key="2">
    <citation type="journal article" date="1992" name="Nucleic Acids Res.">
        <title>Gene clusters for ribosomal proteins in the mitochondrial genome of a liverwort, Marchantia polymorpha.</title>
        <authorList>
            <person name="Takemura M."/>
            <person name="Oda K."/>
            <person name="Yamato K."/>
            <person name="Ohta E."/>
            <person name="Nakamura Y."/>
            <person name="Nozato N."/>
            <person name="Akashi K."/>
            <person name="Ohyama K."/>
        </authorList>
    </citation>
    <scope>NUCLEOTIDE SEQUENCE [GENOMIC DNA]</scope>
</reference>